<organism>
    <name type="scientific">Nephroselmis olivacea</name>
    <name type="common">Green alga</name>
    <dbReference type="NCBI Taxonomy" id="31312"/>
    <lineage>
        <taxon>Eukaryota</taxon>
        <taxon>Viridiplantae</taxon>
        <taxon>Chlorophyta</taxon>
        <taxon>Nephroselmidophyceae</taxon>
        <taxon>Nephroselmidales</taxon>
        <taxon>Nephroselmidaceae</taxon>
        <taxon>Nephroselmis</taxon>
    </lineage>
</organism>
<comment type="subcellular location">
    <subcellularLocation>
        <location>Plastid</location>
        <location>Chloroplast</location>
    </subcellularLocation>
</comment>
<comment type="similarity">
    <text evidence="1">Belongs to the bacterial ribosomal protein bL36 family.</text>
</comment>
<reference key="1">
    <citation type="journal article" date="1999" name="Proc. Natl. Acad. Sci. U.S.A.">
        <title>The complete chloroplast DNA sequence of the green alga Nephroselmis olivacea: insights into the architecture of ancestral chloroplast genomes.</title>
        <authorList>
            <person name="Turmel M."/>
            <person name="Otis C."/>
            <person name="Lemieux C."/>
        </authorList>
    </citation>
    <scope>NUCLEOTIDE SEQUENCE [LARGE SCALE GENOMIC DNA]</scope>
    <source>
        <strain>NIES-484 / S-N-5-8</strain>
    </source>
</reference>
<sequence length="37" mass="4429">MKVRPSVRKICDKCCLIRRHRKLLVICSNPKHKQRQG</sequence>
<geneLocation type="chloroplast"/>
<gene>
    <name type="primary">rpl36</name>
</gene>
<feature type="chain" id="PRO_0000126329" description="Large ribosomal subunit protein bL36c">
    <location>
        <begin position="1"/>
        <end position="37"/>
    </location>
</feature>
<evidence type="ECO:0000305" key="1"/>
<dbReference type="EMBL" id="AF137379">
    <property type="protein sequence ID" value="AAD54790.1"/>
    <property type="molecule type" value="Genomic_DNA"/>
</dbReference>
<dbReference type="RefSeq" id="NP_050819.1">
    <property type="nucleotide sequence ID" value="NC_000927.1"/>
</dbReference>
<dbReference type="SMR" id="Q9TL26"/>
<dbReference type="GeneID" id="802007"/>
<dbReference type="GO" id="GO:0009507">
    <property type="term" value="C:chloroplast"/>
    <property type="evidence" value="ECO:0007669"/>
    <property type="project" value="UniProtKB-SubCell"/>
</dbReference>
<dbReference type="GO" id="GO:1990904">
    <property type="term" value="C:ribonucleoprotein complex"/>
    <property type="evidence" value="ECO:0007669"/>
    <property type="project" value="UniProtKB-KW"/>
</dbReference>
<dbReference type="GO" id="GO:0005840">
    <property type="term" value="C:ribosome"/>
    <property type="evidence" value="ECO:0007669"/>
    <property type="project" value="UniProtKB-KW"/>
</dbReference>
<dbReference type="GO" id="GO:0003735">
    <property type="term" value="F:structural constituent of ribosome"/>
    <property type="evidence" value="ECO:0007669"/>
    <property type="project" value="InterPro"/>
</dbReference>
<dbReference type="GO" id="GO:0006412">
    <property type="term" value="P:translation"/>
    <property type="evidence" value="ECO:0007669"/>
    <property type="project" value="UniProtKB-UniRule"/>
</dbReference>
<dbReference type="HAMAP" id="MF_00251">
    <property type="entry name" value="Ribosomal_bL36"/>
    <property type="match status" value="1"/>
</dbReference>
<dbReference type="InterPro" id="IPR000473">
    <property type="entry name" value="Ribosomal_bL36"/>
</dbReference>
<dbReference type="InterPro" id="IPR035977">
    <property type="entry name" value="Ribosomal_bL36_sp"/>
</dbReference>
<dbReference type="NCBIfam" id="TIGR01022">
    <property type="entry name" value="rpmJ_bact"/>
    <property type="match status" value="1"/>
</dbReference>
<dbReference type="PANTHER" id="PTHR42888">
    <property type="entry name" value="50S RIBOSOMAL PROTEIN L36, CHLOROPLASTIC"/>
    <property type="match status" value="1"/>
</dbReference>
<dbReference type="PANTHER" id="PTHR42888:SF1">
    <property type="entry name" value="LARGE RIBOSOMAL SUBUNIT PROTEIN BL36C"/>
    <property type="match status" value="1"/>
</dbReference>
<dbReference type="Pfam" id="PF00444">
    <property type="entry name" value="Ribosomal_L36"/>
    <property type="match status" value="1"/>
</dbReference>
<dbReference type="SUPFAM" id="SSF57840">
    <property type="entry name" value="Ribosomal protein L36"/>
    <property type="match status" value="1"/>
</dbReference>
<dbReference type="PROSITE" id="PS00828">
    <property type="entry name" value="RIBOSOMAL_L36"/>
    <property type="match status" value="1"/>
</dbReference>
<proteinExistence type="inferred from homology"/>
<protein>
    <recommendedName>
        <fullName evidence="1">Large ribosomal subunit protein bL36c</fullName>
    </recommendedName>
    <alternativeName>
        <fullName>50S ribosomal protein L36, chloroplastic</fullName>
    </alternativeName>
</protein>
<accession>Q9TL26</accession>
<keyword id="KW-0150">Chloroplast</keyword>
<keyword id="KW-0934">Plastid</keyword>
<keyword id="KW-0687">Ribonucleoprotein</keyword>
<keyword id="KW-0689">Ribosomal protein</keyword>
<name>RK36_NEPOL</name>